<organism>
    <name type="scientific">Mus musculus</name>
    <name type="common">Mouse</name>
    <dbReference type="NCBI Taxonomy" id="10090"/>
    <lineage>
        <taxon>Eukaryota</taxon>
        <taxon>Metazoa</taxon>
        <taxon>Chordata</taxon>
        <taxon>Craniata</taxon>
        <taxon>Vertebrata</taxon>
        <taxon>Euteleostomi</taxon>
        <taxon>Mammalia</taxon>
        <taxon>Eutheria</taxon>
        <taxon>Euarchontoglires</taxon>
        <taxon>Glires</taxon>
        <taxon>Rodentia</taxon>
        <taxon>Myomorpha</taxon>
        <taxon>Muroidea</taxon>
        <taxon>Muridae</taxon>
        <taxon>Murinae</taxon>
        <taxon>Mus</taxon>
        <taxon>Mus</taxon>
    </lineage>
</organism>
<name>PAR10_MOUSE</name>
<sequence>MAEVEAGAALELRGLPPEIPDELITLYFENHRRSGGGLLLSWQRLGCGGVLIFQDPADAKRVLAQAEHRLHGVRLSLRPAPPRAPERVLLQHLPPGTSPLSLEQHVQALLGAAGHPVQTCHALASPRQDCALVQLSTPLSEAEVSALAEQARNLPLNGATVSLAWVPQTRAVRVVDSASPVDLLLLELYLENERRSGGGPLEGLRSLPGQLGTVISFQQWQVAERVLKQKHWLQGIELSLVPHYDVLEPEALAEGVSGRDHSATQESGVIGHAPTGTGGLAGALTMAVGSGEAPQQLGTLLRAGPVGAPGQALPVDSGSIRIQGSMGSTSPVDPVESSTELPEQVGPMASDSVGVQEQEGLGEVATGQEGLMGLVGTAMESVETGLESPGYGEMQKQEGLVEMVMSVEPGAVRYLQLYYEDLLASLEDVALFPLEGTDVTGFRLCGARAPCQAAQELLQSLLGSISCHTLNMKHPGSARFLLGVEGQHLLHRLEAQFQCVFGTEHLASATLDIDPERTDPTEALQVLHGHITGIDQESLRLEDVRELLATLESPHGGEDRVPLEMEKEKPGGPGETVVEQQEEIPTLEAEEEPVALSTGARGQLEEEATLQLAIHRSLESQSQVADQQEANALRRAMALSLLEAEEALDEDTGGEAQLVVHTSFEQDVDELNQALSNALEAHLREETVSLQGRMLPPELGARLERCHDVSATLRGDRVVLRGFGVQPARAARHLAALLVDPWDQNLTFPLEASKPNLSEQGLKEPLGRLEALEENSQEFQDVVRAFYSTLDAVHGRIRIVRVERVSHPLLQQQYQLHRERLMQSCQQRPVEQVLYHGTSESAVLDICAHGFNRSFCGRNGTLYGQGVYFAKRASLSVLDRYSPPNAEGYKAVFVAQVLTGDYGQGSRGLKAPPLRVSGQVLRYDSAVDCLQQPRIFVIFHDTQALPTHLITCKNILPGTP</sequence>
<protein>
    <recommendedName>
        <fullName evidence="5">Protein mono-ADP-ribosyltransferase PARP10</fullName>
        <ecNumber evidence="1">2.4.2.-</ecNumber>
    </recommendedName>
    <alternativeName>
        <fullName evidence="1">ADP-ribosyltransferase diphtheria toxin-like 10</fullName>
        <shortName evidence="1">ARTD10</shortName>
    </alternativeName>
    <alternativeName>
        <fullName evidence="1">Poly [ADP-ribose] polymerase 10</fullName>
        <shortName evidence="1">PARP-10</shortName>
    </alternativeName>
</protein>
<reference key="1">
    <citation type="journal article" date="2005" name="Science">
        <title>The transcriptional landscape of the mammalian genome.</title>
        <authorList>
            <person name="Carninci P."/>
            <person name="Kasukawa T."/>
            <person name="Katayama S."/>
            <person name="Gough J."/>
            <person name="Frith M.C."/>
            <person name="Maeda N."/>
            <person name="Oyama R."/>
            <person name="Ravasi T."/>
            <person name="Lenhard B."/>
            <person name="Wells C."/>
            <person name="Kodzius R."/>
            <person name="Shimokawa K."/>
            <person name="Bajic V.B."/>
            <person name="Brenner S.E."/>
            <person name="Batalov S."/>
            <person name="Forrest A.R."/>
            <person name="Zavolan M."/>
            <person name="Davis M.J."/>
            <person name="Wilming L.G."/>
            <person name="Aidinis V."/>
            <person name="Allen J.E."/>
            <person name="Ambesi-Impiombato A."/>
            <person name="Apweiler R."/>
            <person name="Aturaliya R.N."/>
            <person name="Bailey T.L."/>
            <person name="Bansal M."/>
            <person name="Baxter L."/>
            <person name="Beisel K.W."/>
            <person name="Bersano T."/>
            <person name="Bono H."/>
            <person name="Chalk A.M."/>
            <person name="Chiu K.P."/>
            <person name="Choudhary V."/>
            <person name="Christoffels A."/>
            <person name="Clutterbuck D.R."/>
            <person name="Crowe M.L."/>
            <person name="Dalla E."/>
            <person name="Dalrymple B.P."/>
            <person name="de Bono B."/>
            <person name="Della Gatta G."/>
            <person name="di Bernardo D."/>
            <person name="Down T."/>
            <person name="Engstrom P."/>
            <person name="Fagiolini M."/>
            <person name="Faulkner G."/>
            <person name="Fletcher C.F."/>
            <person name="Fukushima T."/>
            <person name="Furuno M."/>
            <person name="Futaki S."/>
            <person name="Gariboldi M."/>
            <person name="Georgii-Hemming P."/>
            <person name="Gingeras T.R."/>
            <person name="Gojobori T."/>
            <person name="Green R.E."/>
            <person name="Gustincich S."/>
            <person name="Harbers M."/>
            <person name="Hayashi Y."/>
            <person name="Hensch T.K."/>
            <person name="Hirokawa N."/>
            <person name="Hill D."/>
            <person name="Huminiecki L."/>
            <person name="Iacono M."/>
            <person name="Ikeo K."/>
            <person name="Iwama A."/>
            <person name="Ishikawa T."/>
            <person name="Jakt M."/>
            <person name="Kanapin A."/>
            <person name="Katoh M."/>
            <person name="Kawasawa Y."/>
            <person name="Kelso J."/>
            <person name="Kitamura H."/>
            <person name="Kitano H."/>
            <person name="Kollias G."/>
            <person name="Krishnan S.P."/>
            <person name="Kruger A."/>
            <person name="Kummerfeld S.K."/>
            <person name="Kurochkin I.V."/>
            <person name="Lareau L.F."/>
            <person name="Lazarevic D."/>
            <person name="Lipovich L."/>
            <person name="Liu J."/>
            <person name="Liuni S."/>
            <person name="McWilliam S."/>
            <person name="Madan Babu M."/>
            <person name="Madera M."/>
            <person name="Marchionni L."/>
            <person name="Matsuda H."/>
            <person name="Matsuzawa S."/>
            <person name="Miki H."/>
            <person name="Mignone F."/>
            <person name="Miyake S."/>
            <person name="Morris K."/>
            <person name="Mottagui-Tabar S."/>
            <person name="Mulder N."/>
            <person name="Nakano N."/>
            <person name="Nakauchi H."/>
            <person name="Ng P."/>
            <person name="Nilsson R."/>
            <person name="Nishiguchi S."/>
            <person name="Nishikawa S."/>
            <person name="Nori F."/>
            <person name="Ohara O."/>
            <person name="Okazaki Y."/>
            <person name="Orlando V."/>
            <person name="Pang K.C."/>
            <person name="Pavan W.J."/>
            <person name="Pavesi G."/>
            <person name="Pesole G."/>
            <person name="Petrovsky N."/>
            <person name="Piazza S."/>
            <person name="Reed J."/>
            <person name="Reid J.F."/>
            <person name="Ring B.Z."/>
            <person name="Ringwald M."/>
            <person name="Rost B."/>
            <person name="Ruan Y."/>
            <person name="Salzberg S.L."/>
            <person name="Sandelin A."/>
            <person name="Schneider C."/>
            <person name="Schoenbach C."/>
            <person name="Sekiguchi K."/>
            <person name="Semple C.A."/>
            <person name="Seno S."/>
            <person name="Sessa L."/>
            <person name="Sheng Y."/>
            <person name="Shibata Y."/>
            <person name="Shimada H."/>
            <person name="Shimada K."/>
            <person name="Silva D."/>
            <person name="Sinclair B."/>
            <person name="Sperling S."/>
            <person name="Stupka E."/>
            <person name="Sugiura K."/>
            <person name="Sultana R."/>
            <person name="Takenaka Y."/>
            <person name="Taki K."/>
            <person name="Tammoja K."/>
            <person name="Tan S.L."/>
            <person name="Tang S."/>
            <person name="Taylor M.S."/>
            <person name="Tegner J."/>
            <person name="Teichmann S.A."/>
            <person name="Ueda H.R."/>
            <person name="van Nimwegen E."/>
            <person name="Verardo R."/>
            <person name="Wei C.L."/>
            <person name="Yagi K."/>
            <person name="Yamanishi H."/>
            <person name="Zabarovsky E."/>
            <person name="Zhu S."/>
            <person name="Zimmer A."/>
            <person name="Hide W."/>
            <person name="Bult C."/>
            <person name="Grimmond S.M."/>
            <person name="Teasdale R.D."/>
            <person name="Liu E.T."/>
            <person name="Brusic V."/>
            <person name="Quackenbush J."/>
            <person name="Wahlestedt C."/>
            <person name="Mattick J.S."/>
            <person name="Hume D.A."/>
            <person name="Kai C."/>
            <person name="Sasaki D."/>
            <person name="Tomaru Y."/>
            <person name="Fukuda S."/>
            <person name="Kanamori-Katayama M."/>
            <person name="Suzuki M."/>
            <person name="Aoki J."/>
            <person name="Arakawa T."/>
            <person name="Iida J."/>
            <person name="Imamura K."/>
            <person name="Itoh M."/>
            <person name="Kato T."/>
            <person name="Kawaji H."/>
            <person name="Kawagashira N."/>
            <person name="Kawashima T."/>
            <person name="Kojima M."/>
            <person name="Kondo S."/>
            <person name="Konno H."/>
            <person name="Nakano K."/>
            <person name="Ninomiya N."/>
            <person name="Nishio T."/>
            <person name="Okada M."/>
            <person name="Plessy C."/>
            <person name="Shibata K."/>
            <person name="Shiraki T."/>
            <person name="Suzuki S."/>
            <person name="Tagami M."/>
            <person name="Waki K."/>
            <person name="Watahiki A."/>
            <person name="Okamura-Oho Y."/>
            <person name="Suzuki H."/>
            <person name="Kawai J."/>
            <person name="Hayashizaki Y."/>
        </authorList>
    </citation>
    <scope>NUCLEOTIDE SEQUENCE [LARGE SCALE MRNA] OF 21-960</scope>
    <source>
        <strain>C57BL/6J</strain>
        <tissue>Bone marrow</tissue>
        <tissue>Mammary gland</tissue>
        <tissue>Placenta</tissue>
        <tissue>Thymus</tissue>
    </source>
</reference>
<reference key="2">
    <citation type="journal article" date="2009" name="PLoS Biol.">
        <title>Lineage-specific biology revealed by a finished genome assembly of the mouse.</title>
        <authorList>
            <person name="Church D.M."/>
            <person name="Goodstadt L."/>
            <person name="Hillier L.W."/>
            <person name="Zody M.C."/>
            <person name="Goldstein S."/>
            <person name="She X."/>
            <person name="Bult C.J."/>
            <person name="Agarwala R."/>
            <person name="Cherry J.L."/>
            <person name="DiCuccio M."/>
            <person name="Hlavina W."/>
            <person name="Kapustin Y."/>
            <person name="Meric P."/>
            <person name="Maglott D."/>
            <person name="Birtle Z."/>
            <person name="Marques A.C."/>
            <person name="Graves T."/>
            <person name="Zhou S."/>
            <person name="Teague B."/>
            <person name="Potamousis K."/>
            <person name="Churas C."/>
            <person name="Place M."/>
            <person name="Herschleb J."/>
            <person name="Runnheim R."/>
            <person name="Forrest D."/>
            <person name="Amos-Landgraf J."/>
            <person name="Schwartz D.C."/>
            <person name="Cheng Z."/>
            <person name="Lindblad-Toh K."/>
            <person name="Eichler E.E."/>
            <person name="Ponting C.P."/>
        </authorList>
    </citation>
    <scope>NUCLEOTIDE SEQUENCE [LARGE SCALE GENOMIC DNA]</scope>
    <source>
        <strain>C57BL/6J</strain>
    </source>
</reference>
<reference key="3">
    <citation type="journal article" date="2004" name="Genome Res.">
        <title>The status, quality, and expansion of the NIH full-length cDNA project: the Mammalian Gene Collection (MGC).</title>
        <authorList>
            <consortium name="The MGC Project Team"/>
        </authorList>
    </citation>
    <scope>NUCLEOTIDE SEQUENCE [LARGE SCALE MRNA] OF 355-960</scope>
    <source>
        <strain>FVB/N</strain>
        <tissue evidence="6">Eye</tissue>
        <tissue>Liver</tissue>
    </source>
</reference>
<gene>
    <name evidence="7" type="primary">Parp10</name>
</gene>
<proteinExistence type="evidence at transcript level"/>
<keyword id="KW-0013">ADP-ribosylation</keyword>
<keyword id="KW-0963">Cytoplasm</keyword>
<keyword id="KW-0227">DNA damage</keyword>
<keyword id="KW-0234">DNA repair</keyword>
<keyword id="KW-0328">Glycosyltransferase</keyword>
<keyword id="KW-0520">NAD</keyword>
<keyword id="KW-0548">Nucleotidyltransferase</keyword>
<keyword id="KW-0539">Nucleus</keyword>
<keyword id="KW-0597">Phosphoprotein</keyword>
<keyword id="KW-1185">Reference proteome</keyword>
<keyword id="KW-0808">Transferase</keyword>
<comment type="function">
    <text evidence="1">ADP-ribosyltransferase that mediates mono-ADP-ribosylation of glutamate and aspartate residues on target proteins. In contrast to PARP1 and PARP2, it is not able to mediate poly-ADP-ribosylation. Catalyzes mono-ADP-ribosylation of GSK3B, leading to negatively regulate GSK3B kinase activity. Involved in translesion DNA synthesis in response to DNA damage via its interaction with PCNA.</text>
</comment>
<comment type="catalytic activity">
    <reaction evidence="1">
        <text>L-lysyl-[protein] + NAD(+) = N(6)-(ADP-D-ribosyl)-L-lysyl-[protein] + nicotinamide + H(+)</text>
        <dbReference type="Rhea" id="RHEA:58220"/>
        <dbReference type="Rhea" id="RHEA-COMP:9752"/>
        <dbReference type="Rhea" id="RHEA-COMP:15088"/>
        <dbReference type="ChEBI" id="CHEBI:15378"/>
        <dbReference type="ChEBI" id="CHEBI:17154"/>
        <dbReference type="ChEBI" id="CHEBI:29969"/>
        <dbReference type="ChEBI" id="CHEBI:57540"/>
        <dbReference type="ChEBI" id="CHEBI:142515"/>
    </reaction>
</comment>
<comment type="catalytic activity">
    <reaction evidence="1">
        <text>L-aspartyl-[protein] + NAD(+) = 4-O-(ADP-D-ribosyl)-L-aspartyl-[protein] + nicotinamide</text>
        <dbReference type="Rhea" id="RHEA:54424"/>
        <dbReference type="Rhea" id="RHEA-COMP:9867"/>
        <dbReference type="Rhea" id="RHEA-COMP:13832"/>
        <dbReference type="ChEBI" id="CHEBI:17154"/>
        <dbReference type="ChEBI" id="CHEBI:29961"/>
        <dbReference type="ChEBI" id="CHEBI:57540"/>
        <dbReference type="ChEBI" id="CHEBI:138102"/>
    </reaction>
</comment>
<comment type="catalytic activity">
    <reaction evidence="1">
        <text>L-glutamyl-[protein] + NAD(+) = 5-O-(ADP-D-ribosyl)-L-glutamyl-[protein] + nicotinamide</text>
        <dbReference type="Rhea" id="RHEA:58224"/>
        <dbReference type="Rhea" id="RHEA-COMP:10208"/>
        <dbReference type="Rhea" id="RHEA-COMP:15089"/>
        <dbReference type="ChEBI" id="CHEBI:17154"/>
        <dbReference type="ChEBI" id="CHEBI:29973"/>
        <dbReference type="ChEBI" id="CHEBI:57540"/>
        <dbReference type="ChEBI" id="CHEBI:142540"/>
    </reaction>
</comment>
<comment type="subunit">
    <text evidence="1">Interacts with MYC. Interacts with PARP14. Interacts (via-PIP box and ubiquitin-interacting motifs) with PCNA.</text>
</comment>
<comment type="subcellular location">
    <subcellularLocation>
        <location evidence="2">Cytoplasm</location>
    </subcellularLocation>
    <subcellularLocation>
        <location evidence="2">Nucleus</location>
    </subcellularLocation>
    <text evidence="2">Localizes in the cytoplasm at steady state, but shuttles between nucleus and cytoplasm in a XPO1-dependent manner.</text>
</comment>
<comment type="domain">
    <text evidence="1">The PIP-box mediates the interaction with PCNA.</text>
</comment>
<comment type="PTM">
    <text evidence="1">Stimulated through its phosphorylation by CDK2. Acquires CDK-dependent phosphorylation through late-G1 to S phase, and from prometaphase to cytokinesis in the nucleolar organizing regions. Phosphorylation is suppressed in growth-arrested cells.</text>
</comment>
<comment type="PTM">
    <text evidence="1">Auto-mono-ADP-ribosylated on glutamate and lysine residues.</text>
</comment>
<comment type="similarity">
    <text evidence="5">Belongs to the ARTD/PARP family.</text>
</comment>
<comment type="sequence caution" evidence="5">
    <conflict type="erroneous initiation">
        <sequence resource="EMBL-CDS" id="AAH25608"/>
    </conflict>
    <text>Extended N-terminus.</text>
</comment>
<comment type="sequence caution" evidence="5">
    <conflict type="frameshift">
        <sequence resource="EMBL-CDS" id="BAC32856"/>
    </conflict>
</comment>
<accession>Q8CIE4</accession>
<accession>F6Z9X8</accession>
<accession>Q3TLV7</accession>
<accession>Q3U6C0</accession>
<accession>Q8BSZ1</accession>
<accession>Q8C8L6</accession>
<accession>Q8R133</accession>
<accession>Q8R1U9</accession>
<evidence type="ECO:0000250" key="1">
    <source>
        <dbReference type="UniProtKB" id="Q53GL7"/>
    </source>
</evidence>
<evidence type="ECO:0000250" key="2">
    <source>
        <dbReference type="UniProtKB" id="Q8K3Y6"/>
    </source>
</evidence>
<evidence type="ECO:0000255" key="3">
    <source>
        <dbReference type="PROSITE-ProRule" id="PRU00397"/>
    </source>
</evidence>
<evidence type="ECO:0000256" key="4">
    <source>
        <dbReference type="SAM" id="MobiDB-lite"/>
    </source>
</evidence>
<evidence type="ECO:0000305" key="5"/>
<evidence type="ECO:0000312" key="6">
    <source>
        <dbReference type="EMBL" id="AAH23056.1"/>
    </source>
</evidence>
<evidence type="ECO:0000312" key="7">
    <source>
        <dbReference type="MGI" id="MGI:3712326"/>
    </source>
</evidence>
<dbReference type="EC" id="2.4.2.-" evidence="1"/>
<dbReference type="EMBL" id="AK028373">
    <property type="protein sequence ID" value="BAC25913.1"/>
    <property type="molecule type" value="mRNA"/>
</dbReference>
<dbReference type="EMBL" id="AK046755">
    <property type="protein sequence ID" value="BAC32856.1"/>
    <property type="status" value="ALT_FRAME"/>
    <property type="molecule type" value="mRNA"/>
</dbReference>
<dbReference type="EMBL" id="AK153205">
    <property type="protein sequence ID" value="BAE31805.1"/>
    <property type="molecule type" value="mRNA"/>
</dbReference>
<dbReference type="EMBL" id="AK166291">
    <property type="protein sequence ID" value="BAE38685.1"/>
    <property type="molecule type" value="mRNA"/>
</dbReference>
<dbReference type="EMBL" id="AC110211">
    <property type="status" value="NOT_ANNOTATED_CDS"/>
    <property type="molecule type" value="Genomic_DNA"/>
</dbReference>
<dbReference type="EMBL" id="BC023056">
    <property type="protein sequence ID" value="AAH23056.1"/>
    <property type="molecule type" value="mRNA"/>
</dbReference>
<dbReference type="EMBL" id="BC024074">
    <property type="protein sequence ID" value="AAH24074.1"/>
    <property type="molecule type" value="mRNA"/>
</dbReference>
<dbReference type="EMBL" id="BC025608">
    <property type="protein sequence ID" value="AAH25608.1"/>
    <property type="status" value="ALT_INIT"/>
    <property type="molecule type" value="mRNA"/>
</dbReference>
<dbReference type="CCDS" id="CCDS49650.1"/>
<dbReference type="RefSeq" id="NP_001157047.1">
    <property type="nucleotide sequence ID" value="NM_001163575.1"/>
</dbReference>
<dbReference type="RefSeq" id="NP_001157048.1">
    <property type="nucleotide sequence ID" value="NM_001163576.1"/>
</dbReference>
<dbReference type="SMR" id="Q8CIE4"/>
<dbReference type="FunCoup" id="Q8CIE4">
    <property type="interactions" value="1533"/>
</dbReference>
<dbReference type="STRING" id="10090.ENSMUSP00000129765"/>
<dbReference type="GlyGen" id="Q8CIE4">
    <property type="glycosylation" value="1 site, 1 N-linked glycan (1 site)"/>
</dbReference>
<dbReference type="iPTMnet" id="Q8CIE4"/>
<dbReference type="PhosphoSitePlus" id="Q8CIE4"/>
<dbReference type="jPOST" id="Q8CIE4"/>
<dbReference type="PaxDb" id="10090-ENSMUSP00000129765"/>
<dbReference type="ProteomicsDB" id="334670"/>
<dbReference type="ProteomicsDB" id="357507"/>
<dbReference type="Pumba" id="Q8CIE4"/>
<dbReference type="Antibodypedia" id="28206">
    <property type="antibodies" value="104 antibodies from 28 providers"/>
</dbReference>
<dbReference type="Ensembl" id="ENSMUST00000075689.7">
    <property type="protein sequence ID" value="ENSMUSP00000075110.7"/>
    <property type="gene ID" value="ENSMUSG00000063268.13"/>
</dbReference>
<dbReference type="Ensembl" id="ENSMUST00000165738.8">
    <property type="protein sequence ID" value="ENSMUSP00000129765.2"/>
    <property type="gene ID" value="ENSMUSG00000063268.13"/>
</dbReference>
<dbReference type="GeneID" id="671535"/>
<dbReference type="KEGG" id="mmu:671535"/>
<dbReference type="UCSC" id="uc007wjj.2">
    <property type="organism name" value="mouse"/>
</dbReference>
<dbReference type="AGR" id="MGI:3712326"/>
<dbReference type="CTD" id="84875"/>
<dbReference type="MGI" id="MGI:3712326">
    <property type="gene designation" value="Parp10"/>
</dbReference>
<dbReference type="VEuPathDB" id="HostDB:ENSMUSG00000063268"/>
<dbReference type="eggNOG" id="ENOG502R572">
    <property type="taxonomic scope" value="Eukaryota"/>
</dbReference>
<dbReference type="GeneTree" id="ENSGT00940000162035"/>
<dbReference type="HOGENOM" id="CLU_014825_3_2_1"/>
<dbReference type="InParanoid" id="Q8CIE4"/>
<dbReference type="OMA" id="DHWLQGS"/>
<dbReference type="OrthoDB" id="6133115at2759"/>
<dbReference type="PhylomeDB" id="Q8CIE4"/>
<dbReference type="TreeFam" id="TF328965"/>
<dbReference type="Reactome" id="R-MMU-197264">
    <property type="pathway name" value="Nicotinamide salvaging"/>
</dbReference>
<dbReference type="BioGRID-ORCS" id="671535">
    <property type="hits" value="4 hits in 80 CRISPR screens"/>
</dbReference>
<dbReference type="ChiTaRS" id="Parp10">
    <property type="organism name" value="mouse"/>
</dbReference>
<dbReference type="PRO" id="PR:Q8CIE4"/>
<dbReference type="Proteomes" id="UP000000589">
    <property type="component" value="Chromosome 15"/>
</dbReference>
<dbReference type="RNAct" id="Q8CIE4">
    <property type="molecule type" value="protein"/>
</dbReference>
<dbReference type="Bgee" id="ENSMUSG00000063268">
    <property type="expression patterns" value="Expressed in granulocyte and 120 other cell types or tissues"/>
</dbReference>
<dbReference type="ExpressionAtlas" id="Q8CIE4">
    <property type="expression patterns" value="baseline and differential"/>
</dbReference>
<dbReference type="GO" id="GO:0005829">
    <property type="term" value="C:cytosol"/>
    <property type="evidence" value="ECO:0007669"/>
    <property type="project" value="Ensembl"/>
</dbReference>
<dbReference type="GO" id="GO:0005794">
    <property type="term" value="C:Golgi apparatus"/>
    <property type="evidence" value="ECO:0007669"/>
    <property type="project" value="Ensembl"/>
</dbReference>
<dbReference type="GO" id="GO:0005730">
    <property type="term" value="C:nucleolus"/>
    <property type="evidence" value="ECO:0007669"/>
    <property type="project" value="Ensembl"/>
</dbReference>
<dbReference type="GO" id="GO:0140297">
    <property type="term" value="F:DNA-binding transcription factor binding"/>
    <property type="evidence" value="ECO:0007669"/>
    <property type="project" value="Ensembl"/>
</dbReference>
<dbReference type="GO" id="GO:0070530">
    <property type="term" value="F:K63-linked polyubiquitin modification-dependent protein binding"/>
    <property type="evidence" value="ECO:0007669"/>
    <property type="project" value="Ensembl"/>
</dbReference>
<dbReference type="GO" id="GO:0003950">
    <property type="term" value="F:NAD+ poly-ADP-ribosyltransferase activity"/>
    <property type="evidence" value="ECO:0007669"/>
    <property type="project" value="Ensembl"/>
</dbReference>
<dbReference type="GO" id="GO:1990404">
    <property type="term" value="F:NAD+-protein mono-ADP-ribosyltransferase activity"/>
    <property type="evidence" value="ECO:0000250"/>
    <property type="project" value="UniProtKB"/>
</dbReference>
<dbReference type="GO" id="GO:0140806">
    <property type="term" value="F:NAD+-protein-aspartate ADP-ribosyltransferase activity"/>
    <property type="evidence" value="ECO:0007669"/>
    <property type="project" value="RHEA"/>
</dbReference>
<dbReference type="GO" id="GO:0140807">
    <property type="term" value="F:NAD+-protein-glutamate ADP-ribosyltransferase activity"/>
    <property type="evidence" value="ECO:0007669"/>
    <property type="project" value="RHEA"/>
</dbReference>
<dbReference type="GO" id="GO:0140804">
    <property type="term" value="F:NAD+-protein-lysine ADP-ribosyltransferase activity"/>
    <property type="evidence" value="ECO:0007669"/>
    <property type="project" value="RHEA"/>
</dbReference>
<dbReference type="GO" id="GO:0016779">
    <property type="term" value="F:nucleotidyltransferase activity"/>
    <property type="evidence" value="ECO:0007669"/>
    <property type="project" value="UniProtKB-KW"/>
</dbReference>
<dbReference type="GO" id="GO:0006325">
    <property type="term" value="P:chromatin organization"/>
    <property type="evidence" value="ECO:0007669"/>
    <property type="project" value="Ensembl"/>
</dbReference>
<dbReference type="GO" id="GO:0048147">
    <property type="term" value="P:negative regulation of fibroblast proliferation"/>
    <property type="evidence" value="ECO:0007669"/>
    <property type="project" value="Ensembl"/>
</dbReference>
<dbReference type="GO" id="GO:0010629">
    <property type="term" value="P:negative regulation of gene expression"/>
    <property type="evidence" value="ECO:0007669"/>
    <property type="project" value="Ensembl"/>
</dbReference>
<dbReference type="GO" id="GO:1900045">
    <property type="term" value="P:negative regulation of protein K63-linked ubiquitination"/>
    <property type="evidence" value="ECO:0007669"/>
    <property type="project" value="Ensembl"/>
</dbReference>
<dbReference type="GO" id="GO:0070213">
    <property type="term" value="P:protein auto-ADP-ribosylation"/>
    <property type="evidence" value="ECO:0007669"/>
    <property type="project" value="Ensembl"/>
</dbReference>
<dbReference type="GO" id="GO:0070212">
    <property type="term" value="P:protein poly-ADP-ribosylation"/>
    <property type="evidence" value="ECO:0007669"/>
    <property type="project" value="Ensembl"/>
</dbReference>
<dbReference type="GO" id="GO:0019985">
    <property type="term" value="P:translesion synthesis"/>
    <property type="evidence" value="ECO:0000250"/>
    <property type="project" value="UniProtKB"/>
</dbReference>
<dbReference type="CDD" id="cd12547">
    <property type="entry name" value="RRM1_2_PAR10"/>
    <property type="match status" value="1"/>
</dbReference>
<dbReference type="CDD" id="cd01439">
    <property type="entry name" value="TCCD_inducible_PARP_like"/>
    <property type="match status" value="1"/>
</dbReference>
<dbReference type="FunFam" id="3.30.70.330:FF:000344">
    <property type="entry name" value="Poly [ADP-ribose] polymerase"/>
    <property type="match status" value="1"/>
</dbReference>
<dbReference type="FunFam" id="3.90.228.10:FF:000008">
    <property type="entry name" value="Poly [ADP-ribose] polymerase"/>
    <property type="match status" value="1"/>
</dbReference>
<dbReference type="Gene3D" id="3.30.70.330">
    <property type="match status" value="2"/>
</dbReference>
<dbReference type="Gene3D" id="3.90.228.10">
    <property type="match status" value="1"/>
</dbReference>
<dbReference type="InterPro" id="IPR052056">
    <property type="entry name" value="Mono-ARTD/PARP"/>
</dbReference>
<dbReference type="InterPro" id="IPR012677">
    <property type="entry name" value="Nucleotide-bd_a/b_plait_sf"/>
</dbReference>
<dbReference type="InterPro" id="IPR034464">
    <property type="entry name" value="PAR10_RRM1_2"/>
</dbReference>
<dbReference type="InterPro" id="IPR012317">
    <property type="entry name" value="Poly(ADP-ribose)pol_cat_dom"/>
</dbReference>
<dbReference type="PANTHER" id="PTHR14453">
    <property type="entry name" value="PARP/ZINC FINGER CCCH TYPE DOMAIN CONTAINING PROTEIN"/>
    <property type="match status" value="1"/>
</dbReference>
<dbReference type="PANTHER" id="PTHR14453:SF94">
    <property type="entry name" value="PROTEIN MONO-ADP-RIBOSYLTRANSFERASE PARP10"/>
    <property type="match status" value="1"/>
</dbReference>
<dbReference type="Pfam" id="PF00644">
    <property type="entry name" value="PARP"/>
    <property type="match status" value="1"/>
</dbReference>
<dbReference type="Pfam" id="PF23085">
    <property type="entry name" value="RRM_PARP14_3"/>
    <property type="match status" value="1"/>
</dbReference>
<dbReference type="SUPFAM" id="SSF56399">
    <property type="entry name" value="ADP-ribosylation"/>
    <property type="match status" value="1"/>
</dbReference>
<dbReference type="PROSITE" id="PS51059">
    <property type="entry name" value="PARP_CATALYTIC"/>
    <property type="match status" value="1"/>
</dbReference>
<feature type="chain" id="PRO_0000446172" description="Protein mono-ADP-ribosyltransferase PARP10">
    <location>
        <begin position="1"/>
        <end position="960"/>
    </location>
</feature>
<feature type="domain" description="PARP catalytic" evidence="3">
    <location>
        <begin position="755"/>
        <end position="960"/>
    </location>
</feature>
<feature type="region of interest" description="Disordered" evidence="4">
    <location>
        <begin position="325"/>
        <end position="346"/>
    </location>
</feature>
<feature type="region of interest" description="Disordered" evidence="4">
    <location>
        <begin position="553"/>
        <end position="576"/>
    </location>
</feature>
<feature type="region of interest" description="Myc binding" evidence="1">
    <location>
        <begin position="649"/>
        <end position="856"/>
    </location>
</feature>
<feature type="short sequence motif" description="Ubiquitin-interacting" evidence="1">
    <location>
        <begin position="604"/>
        <end position="621"/>
    </location>
</feature>
<feature type="short sequence motif" description="PIP-box" evidence="1">
    <location>
        <begin position="780"/>
        <end position="787"/>
    </location>
</feature>
<feature type="compositionally biased region" description="Polar residues" evidence="4">
    <location>
        <begin position="325"/>
        <end position="341"/>
    </location>
</feature>
<feature type="compositionally biased region" description="Basic and acidic residues" evidence="4">
    <location>
        <begin position="555"/>
        <end position="570"/>
    </location>
</feature>
<feature type="modified residue" description="ADP-ribosyl glutamic acid" evidence="1">
    <location>
        <position position="103"/>
    </location>
</feature>
<feature type="modified residue" description="Phosphoserine" evidence="1">
    <location>
        <position position="381"/>
    </location>
</feature>
<feature type="modified residue" description="Phosphoserine" evidence="1">
    <location>
        <position position="388"/>
    </location>
</feature>
<feature type="modified residue" description="Phosphoserine" evidence="1">
    <location>
        <position position="617"/>
    </location>
</feature>
<feature type="modified residue" description="ADP-ribosyl glutamic acid" evidence="1">
    <location>
        <position position="831"/>
    </location>
</feature>
<feature type="sequence conflict" description="In Ref. 1; BAC25913." evidence="5" ref="1">
    <original>G</original>
    <variation>S</variation>
    <location>
        <position position="255"/>
    </location>
</feature>
<feature type="sequence conflict" description="In Ref. 1; BAE38685." evidence="5" ref="1">
    <original>A</original>
    <variation>T</variation>
    <location>
        <position position="287"/>
    </location>
</feature>
<feature type="sequence conflict" description="In Ref. 1; BAE38685." evidence="5" ref="1">
    <original>V</original>
    <variation>I</variation>
    <location>
        <position position="315"/>
    </location>
</feature>
<feature type="sequence conflict" description="In Ref. 1; BAE38685." evidence="5" ref="1">
    <original>H</original>
    <variation>Y</variation>
    <location>
        <position position="491"/>
    </location>
</feature>
<feature type="sequence conflict" description="In Ref. 1; BAE38685." evidence="5" ref="1">
    <original>A</original>
    <variation>S</variation>
    <location>
        <position position="647"/>
    </location>
</feature>